<accession>B0U4X9</accession>
<sequence length="467" mass="52497">MTCRTRFAPSPTGYLHIGGARTALYCWLEARRRNGQFLLRIEDTDRERSTQAAIDAILHAMDWLGLDYDEPPVYQTQRIERYNQVAARLLAEGKAYYAYDSKDTLNAMREAALRTGEKPRYNGAAREANLPYRDDPNRVIRFKNPHTGTVAFDDLIKGRIQIANSELDDMVILRPDGYPTYNFAVVVDDWDMNITEVIRGDDHINNTPRQINLYHALGAPLPTFAHLPMILDEQGAKLSKRTGAADVMQYRDSGYLPHALINYLVRLGWSHGDQELFNRQALIDLFQINDVNSKAARLDMAKLGWVNQHYLKTDDPATLAPPLVWHLEQRGIDVSAGPAPTDVILALRERVQTLKEMAEKAEIWYCPLQRYDEIAVAKHLKPGAETALLHARTLLAALPAWTVDNVDTALRTIATTLEIGMGKVAQPLRVAITGTQVSPDIAYTVYLTGRNEALKRIDAALIKISTA</sequence>
<keyword id="KW-0030">Aminoacyl-tRNA synthetase</keyword>
<keyword id="KW-0067">ATP-binding</keyword>
<keyword id="KW-0963">Cytoplasm</keyword>
<keyword id="KW-0436">Ligase</keyword>
<keyword id="KW-0547">Nucleotide-binding</keyword>
<keyword id="KW-0648">Protein biosynthesis</keyword>
<dbReference type="EC" id="6.1.1.17" evidence="1"/>
<dbReference type="EMBL" id="CP000941">
    <property type="protein sequence ID" value="ACA12896.1"/>
    <property type="molecule type" value="Genomic_DNA"/>
</dbReference>
<dbReference type="RefSeq" id="WP_004084450.1">
    <property type="nucleotide sequence ID" value="NC_010513.1"/>
</dbReference>
<dbReference type="SMR" id="B0U4X9"/>
<dbReference type="KEGG" id="xfm:Xfasm12_2028"/>
<dbReference type="HOGENOM" id="CLU_015768_6_0_6"/>
<dbReference type="GO" id="GO:0005829">
    <property type="term" value="C:cytosol"/>
    <property type="evidence" value="ECO:0007669"/>
    <property type="project" value="TreeGrafter"/>
</dbReference>
<dbReference type="GO" id="GO:0005524">
    <property type="term" value="F:ATP binding"/>
    <property type="evidence" value="ECO:0007669"/>
    <property type="project" value="UniProtKB-UniRule"/>
</dbReference>
<dbReference type="GO" id="GO:0004818">
    <property type="term" value="F:glutamate-tRNA ligase activity"/>
    <property type="evidence" value="ECO:0007669"/>
    <property type="project" value="UniProtKB-UniRule"/>
</dbReference>
<dbReference type="GO" id="GO:0000049">
    <property type="term" value="F:tRNA binding"/>
    <property type="evidence" value="ECO:0007669"/>
    <property type="project" value="InterPro"/>
</dbReference>
<dbReference type="GO" id="GO:0008270">
    <property type="term" value="F:zinc ion binding"/>
    <property type="evidence" value="ECO:0007669"/>
    <property type="project" value="InterPro"/>
</dbReference>
<dbReference type="GO" id="GO:0006424">
    <property type="term" value="P:glutamyl-tRNA aminoacylation"/>
    <property type="evidence" value="ECO:0007669"/>
    <property type="project" value="UniProtKB-UniRule"/>
</dbReference>
<dbReference type="CDD" id="cd00808">
    <property type="entry name" value="GluRS_core"/>
    <property type="match status" value="1"/>
</dbReference>
<dbReference type="FunFam" id="3.40.50.620:FF:000007">
    <property type="entry name" value="Glutamate--tRNA ligase"/>
    <property type="match status" value="1"/>
</dbReference>
<dbReference type="Gene3D" id="1.10.10.350">
    <property type="match status" value="1"/>
</dbReference>
<dbReference type="Gene3D" id="3.40.50.620">
    <property type="entry name" value="HUPs"/>
    <property type="match status" value="1"/>
</dbReference>
<dbReference type="HAMAP" id="MF_00022">
    <property type="entry name" value="Glu_tRNA_synth_type1"/>
    <property type="match status" value="1"/>
</dbReference>
<dbReference type="InterPro" id="IPR045462">
    <property type="entry name" value="aa-tRNA-synth_I_cd-bd"/>
</dbReference>
<dbReference type="InterPro" id="IPR020751">
    <property type="entry name" value="aa-tRNA-synth_I_codon-bd_sub2"/>
</dbReference>
<dbReference type="InterPro" id="IPR001412">
    <property type="entry name" value="aa-tRNA-synth_I_CS"/>
</dbReference>
<dbReference type="InterPro" id="IPR008925">
    <property type="entry name" value="aa_tRNA-synth_I_cd-bd_sf"/>
</dbReference>
<dbReference type="InterPro" id="IPR004527">
    <property type="entry name" value="Glu-tRNA-ligase_bac/mito"/>
</dbReference>
<dbReference type="InterPro" id="IPR000924">
    <property type="entry name" value="Glu/Gln-tRNA-synth"/>
</dbReference>
<dbReference type="InterPro" id="IPR020058">
    <property type="entry name" value="Glu/Gln-tRNA-synth_Ib_cat-dom"/>
</dbReference>
<dbReference type="InterPro" id="IPR049940">
    <property type="entry name" value="GluQ/Sye"/>
</dbReference>
<dbReference type="InterPro" id="IPR033910">
    <property type="entry name" value="GluRS_core"/>
</dbReference>
<dbReference type="InterPro" id="IPR014729">
    <property type="entry name" value="Rossmann-like_a/b/a_fold"/>
</dbReference>
<dbReference type="NCBIfam" id="TIGR00464">
    <property type="entry name" value="gltX_bact"/>
    <property type="match status" value="1"/>
</dbReference>
<dbReference type="PANTHER" id="PTHR43311">
    <property type="entry name" value="GLUTAMATE--TRNA LIGASE"/>
    <property type="match status" value="1"/>
</dbReference>
<dbReference type="PANTHER" id="PTHR43311:SF2">
    <property type="entry name" value="GLUTAMATE--TRNA LIGASE, MITOCHONDRIAL-RELATED"/>
    <property type="match status" value="1"/>
</dbReference>
<dbReference type="Pfam" id="PF19269">
    <property type="entry name" value="Anticodon_2"/>
    <property type="match status" value="1"/>
</dbReference>
<dbReference type="Pfam" id="PF00749">
    <property type="entry name" value="tRNA-synt_1c"/>
    <property type="match status" value="1"/>
</dbReference>
<dbReference type="PRINTS" id="PR00987">
    <property type="entry name" value="TRNASYNTHGLU"/>
</dbReference>
<dbReference type="SUPFAM" id="SSF48163">
    <property type="entry name" value="An anticodon-binding domain of class I aminoacyl-tRNA synthetases"/>
    <property type="match status" value="1"/>
</dbReference>
<dbReference type="SUPFAM" id="SSF52374">
    <property type="entry name" value="Nucleotidylyl transferase"/>
    <property type="match status" value="1"/>
</dbReference>
<dbReference type="PROSITE" id="PS00178">
    <property type="entry name" value="AA_TRNA_LIGASE_I"/>
    <property type="match status" value="1"/>
</dbReference>
<proteinExistence type="inferred from homology"/>
<name>SYE_XYLFM</name>
<gene>
    <name evidence="1" type="primary">gltX</name>
    <name type="ordered locus">Xfasm12_2028</name>
</gene>
<reference key="1">
    <citation type="journal article" date="2010" name="J. Bacteriol.">
        <title>Whole genome sequences of two Xylella fastidiosa strains (M12 and M23) causing almond leaf scorch disease in California.</title>
        <authorList>
            <person name="Chen J."/>
            <person name="Xie G."/>
            <person name="Han S."/>
            <person name="Chertkov O."/>
            <person name="Sims D."/>
            <person name="Civerolo E.L."/>
        </authorList>
    </citation>
    <scope>NUCLEOTIDE SEQUENCE [LARGE SCALE GENOMIC DNA]</scope>
    <source>
        <strain>M12</strain>
    </source>
</reference>
<organism>
    <name type="scientific">Xylella fastidiosa (strain M12)</name>
    <dbReference type="NCBI Taxonomy" id="405440"/>
    <lineage>
        <taxon>Bacteria</taxon>
        <taxon>Pseudomonadati</taxon>
        <taxon>Pseudomonadota</taxon>
        <taxon>Gammaproteobacteria</taxon>
        <taxon>Lysobacterales</taxon>
        <taxon>Lysobacteraceae</taxon>
        <taxon>Xylella</taxon>
    </lineage>
</organism>
<evidence type="ECO:0000255" key="1">
    <source>
        <dbReference type="HAMAP-Rule" id="MF_00022"/>
    </source>
</evidence>
<feature type="chain" id="PRO_1000090125" description="Glutamate--tRNA ligase">
    <location>
        <begin position="1"/>
        <end position="467"/>
    </location>
</feature>
<feature type="short sequence motif" description="'HIGH' region" evidence="1">
    <location>
        <begin position="9"/>
        <end position="19"/>
    </location>
</feature>
<feature type="short sequence motif" description="'KMSKS' region" evidence="1">
    <location>
        <begin position="237"/>
        <end position="241"/>
    </location>
</feature>
<feature type="binding site" evidence="1">
    <location>
        <position position="240"/>
    </location>
    <ligand>
        <name>ATP</name>
        <dbReference type="ChEBI" id="CHEBI:30616"/>
    </ligand>
</feature>
<comment type="function">
    <text evidence="1">Catalyzes the attachment of glutamate to tRNA(Glu) in a two-step reaction: glutamate is first activated by ATP to form Glu-AMP and then transferred to the acceptor end of tRNA(Glu).</text>
</comment>
<comment type="catalytic activity">
    <reaction evidence="1">
        <text>tRNA(Glu) + L-glutamate + ATP = L-glutamyl-tRNA(Glu) + AMP + diphosphate</text>
        <dbReference type="Rhea" id="RHEA:23540"/>
        <dbReference type="Rhea" id="RHEA-COMP:9663"/>
        <dbReference type="Rhea" id="RHEA-COMP:9680"/>
        <dbReference type="ChEBI" id="CHEBI:29985"/>
        <dbReference type="ChEBI" id="CHEBI:30616"/>
        <dbReference type="ChEBI" id="CHEBI:33019"/>
        <dbReference type="ChEBI" id="CHEBI:78442"/>
        <dbReference type="ChEBI" id="CHEBI:78520"/>
        <dbReference type="ChEBI" id="CHEBI:456215"/>
        <dbReference type="EC" id="6.1.1.17"/>
    </reaction>
</comment>
<comment type="subunit">
    <text evidence="1">Monomer.</text>
</comment>
<comment type="subcellular location">
    <subcellularLocation>
        <location evidence="1">Cytoplasm</location>
    </subcellularLocation>
</comment>
<comment type="similarity">
    <text evidence="1">Belongs to the class-I aminoacyl-tRNA synthetase family. Glutamate--tRNA ligase type 1 subfamily.</text>
</comment>
<protein>
    <recommendedName>
        <fullName evidence="1">Glutamate--tRNA ligase</fullName>
        <ecNumber evidence="1">6.1.1.17</ecNumber>
    </recommendedName>
    <alternativeName>
        <fullName evidence="1">Glutamyl-tRNA synthetase</fullName>
        <shortName evidence="1">GluRS</shortName>
    </alternativeName>
</protein>